<dbReference type="EC" id="3.2.2.22"/>
<dbReference type="PIR" id="A58923">
    <property type="entry name" value="A58923"/>
</dbReference>
<dbReference type="SMR" id="Q7M1Z2"/>
<dbReference type="GO" id="GO:0030598">
    <property type="term" value="F:rRNA N-glycosylase activity"/>
    <property type="evidence" value="ECO:0007669"/>
    <property type="project" value="UniProtKB-EC"/>
</dbReference>
<dbReference type="GO" id="GO:0090729">
    <property type="term" value="F:toxin activity"/>
    <property type="evidence" value="ECO:0007669"/>
    <property type="project" value="UniProtKB-KW"/>
</dbReference>
<dbReference type="GO" id="GO:0006952">
    <property type="term" value="P:defense response"/>
    <property type="evidence" value="ECO:0007669"/>
    <property type="project" value="UniProtKB-KW"/>
</dbReference>
<dbReference type="GO" id="GO:0017148">
    <property type="term" value="P:negative regulation of translation"/>
    <property type="evidence" value="ECO:0007669"/>
    <property type="project" value="UniProtKB-KW"/>
</dbReference>
<dbReference type="Gene3D" id="3.40.420.10">
    <property type="entry name" value="Ricin (A subunit), domain 1"/>
    <property type="match status" value="1"/>
</dbReference>
<dbReference type="Gene3D" id="4.10.470.10">
    <property type="entry name" value="Ricin (A Subunit), domain 2"/>
    <property type="match status" value="1"/>
</dbReference>
<dbReference type="InterPro" id="IPR036041">
    <property type="entry name" value="Ribosome-inact_prot_sf"/>
</dbReference>
<dbReference type="InterPro" id="IPR017989">
    <property type="entry name" value="Ribosome_inactivat_1/2"/>
</dbReference>
<dbReference type="InterPro" id="IPR001574">
    <property type="entry name" value="Ribosome_inactivat_prot"/>
</dbReference>
<dbReference type="InterPro" id="IPR016138">
    <property type="entry name" value="Ribosome_inactivat_prot_sub1"/>
</dbReference>
<dbReference type="InterPro" id="IPR016139">
    <property type="entry name" value="Ribosome_inactivat_prot_sub2"/>
</dbReference>
<dbReference type="PANTHER" id="PTHR33453">
    <property type="match status" value="1"/>
</dbReference>
<dbReference type="PANTHER" id="PTHR33453:SF34">
    <property type="entry name" value="RIBOSOME-INACTIVATING PROTEIN"/>
    <property type="match status" value="1"/>
</dbReference>
<dbReference type="Pfam" id="PF00161">
    <property type="entry name" value="RIP"/>
    <property type="match status" value="1"/>
</dbReference>
<dbReference type="PRINTS" id="PR00396">
    <property type="entry name" value="SHIGARICIN"/>
</dbReference>
<dbReference type="SUPFAM" id="SSF56371">
    <property type="entry name" value="Ribosome inactivating proteins (RIP)"/>
    <property type="match status" value="1"/>
</dbReference>
<proteinExistence type="evidence at protein level"/>
<sequence>VTSITLDLVNPTAGQYSSFVDKIRNNVKDPNLKYGGTDIAVIGPPSKDKFLRINFQSSRGTVSLGLKRDNLYVVAYLAMDNTNVNRAYYFRSEITSAELTALFPEATAANHKALEYTEDYHSIEKNAQITEGDKSRKELGLGINLLSSTMDTVNKKVRVVKNEARFLLIAIQMTAEAVRFRYIQNLVTKNFPNKFNSENKVIKFEVNWKKISTAIHGDAKNGVFNKDYDFGFGKVRLVKDLQMGLLMHLGKPK</sequence>
<name>RIP9_SAPOF</name>
<comment type="function">
    <text evidence="1">Ribosome-inactivating protein of type 1, inhibits protein synthesis in animal cells.</text>
</comment>
<comment type="catalytic activity">
    <reaction evidence="1">
        <text>Endohydrolysis of the N-glycosidic bond at one specific adenosine on the 28S rRNA.</text>
        <dbReference type="EC" id="3.2.2.22"/>
    </reaction>
</comment>
<comment type="mass spectrometry"/>
<comment type="similarity">
    <text evidence="3">Belongs to the ribosome-inactivating protein family. Type 1 RIP subfamily.</text>
</comment>
<keyword id="KW-0903">Direct protein sequencing</keyword>
<keyword id="KW-0378">Hydrolase</keyword>
<keyword id="KW-0611">Plant defense</keyword>
<keyword id="KW-0652">Protein synthesis inhibitor</keyword>
<keyword id="KW-0800">Toxin</keyword>
<protein>
    <recommendedName>
        <fullName>Ribosome-inactivating protein saporin-9</fullName>
        <shortName>SAP-9</shortName>
        <shortName>SO-9</shortName>
        <ecNumber>3.2.2.22</ecNumber>
    </recommendedName>
    <alternativeName>
        <fullName>rRNA N-glycosidase</fullName>
    </alternativeName>
</protein>
<evidence type="ECO:0000250" key="1">
    <source>
        <dbReference type="UniProtKB" id="P20656"/>
    </source>
</evidence>
<evidence type="ECO:0000250" key="2">
    <source>
        <dbReference type="UniProtKB" id="P33186"/>
    </source>
</evidence>
<evidence type="ECO:0000255" key="3"/>
<evidence type="ECO:0000269" key="4">
    <source>
    </source>
</evidence>
<evidence type="ECO:0000305" key="5"/>
<evidence type="ECO:0000312" key="6">
    <source>
        <dbReference type="PIR" id="A58923"/>
    </source>
</evidence>
<organism>
    <name type="scientific">Saponaria officinalis</name>
    <name type="common">Common soapwort</name>
    <name type="synonym">Lychnis saponaria</name>
    <dbReference type="NCBI Taxonomy" id="3572"/>
    <lineage>
        <taxon>Eukaryota</taxon>
        <taxon>Viridiplantae</taxon>
        <taxon>Streptophyta</taxon>
        <taxon>Embryophyta</taxon>
        <taxon>Tracheophyta</taxon>
        <taxon>Spermatophyta</taxon>
        <taxon>Magnoliopsida</taxon>
        <taxon>eudicotyledons</taxon>
        <taxon>Gunneridae</taxon>
        <taxon>Pentapetalae</taxon>
        <taxon>Caryophyllales</taxon>
        <taxon>Caryophyllaceae</taxon>
        <taxon>Caryophylleae</taxon>
        <taxon>Saponaria</taxon>
    </lineage>
</organism>
<feature type="chain" id="PRO_0000253946" description="Ribosome-inactivating protein saporin-9">
    <location>
        <begin position="1"/>
        <end position="253"/>
    </location>
</feature>
<feature type="active site" evidence="2">
    <location>
        <position position="176"/>
    </location>
</feature>
<reference evidence="5 6" key="1">
    <citation type="journal article" date="2001" name="J. Mass Spectrom.">
        <title>Reliable sequence determination of ribosome-inactivating proteins by combining electrospray mass spectrometry and Edman degradation.</title>
        <authorList>
            <person name="Di Maro A."/>
            <person name="Ferranti P."/>
            <person name="Mastronicola M."/>
            <person name="Polito L."/>
            <person name="Bolognesi A."/>
            <person name="Stirpe F."/>
            <person name="Malorni A."/>
            <person name="Parente A."/>
        </authorList>
    </citation>
    <scope>PROTEIN SEQUENCE</scope>
    <scope>MASS SPECTROMETRY</scope>
    <source>
        <tissue evidence="4">Seed</tissue>
    </source>
</reference>
<accession>Q7M1Z2</accession>
<gene>
    <name type="primary">SAP9</name>
</gene>